<proteinExistence type="inferred from homology"/>
<gene>
    <name type="primary">pknA2</name>
    <name type="ordered locus">BL1425</name>
</gene>
<feature type="chain" id="PRO_0000171184" description="Probable serine/threonine-protein kinase pknA2">
    <location>
        <begin position="1"/>
        <end position="757"/>
    </location>
</feature>
<feature type="domain" description="Protein kinase" evidence="1">
    <location>
        <begin position="14"/>
        <end position="274"/>
    </location>
</feature>
<feature type="domain" description="PASTA 1" evidence="2">
    <location>
        <begin position="466"/>
        <end position="539"/>
    </location>
</feature>
<feature type="domain" description="PASTA 2" evidence="2">
    <location>
        <begin position="545"/>
        <end position="614"/>
    </location>
</feature>
<feature type="domain" description="PASTA 3" evidence="2">
    <location>
        <begin position="615"/>
        <end position="681"/>
    </location>
</feature>
<feature type="region of interest" description="Disordered" evidence="4">
    <location>
        <begin position="344"/>
        <end position="387"/>
    </location>
</feature>
<feature type="active site" description="Proton acceptor" evidence="1 3">
    <location>
        <position position="140"/>
    </location>
</feature>
<feature type="binding site" evidence="1">
    <location>
        <begin position="20"/>
        <end position="28"/>
    </location>
    <ligand>
        <name>ATP</name>
        <dbReference type="ChEBI" id="CHEBI:30616"/>
    </ligand>
</feature>
<feature type="binding site" evidence="1">
    <location>
        <position position="43"/>
    </location>
    <ligand>
        <name>ATP</name>
        <dbReference type="ChEBI" id="CHEBI:30616"/>
    </ligand>
</feature>
<accession>Q8G4G1</accession>
<keyword id="KW-0067">ATP-binding</keyword>
<keyword id="KW-0418">Kinase</keyword>
<keyword id="KW-0547">Nucleotide-binding</keyword>
<keyword id="KW-1185">Reference proteome</keyword>
<keyword id="KW-0677">Repeat</keyword>
<keyword id="KW-0723">Serine/threonine-protein kinase</keyword>
<keyword id="KW-0808">Transferase</keyword>
<reference key="1">
    <citation type="journal article" date="2002" name="Proc. Natl. Acad. Sci. U.S.A.">
        <title>The genome sequence of Bifidobacterium longum reflects its adaptation to the human gastrointestinal tract.</title>
        <authorList>
            <person name="Schell M.A."/>
            <person name="Karmirantzou M."/>
            <person name="Snel B."/>
            <person name="Vilanova D."/>
            <person name="Berger B."/>
            <person name="Pessi G."/>
            <person name="Zwahlen M.-C."/>
            <person name="Desiere F."/>
            <person name="Bork P."/>
            <person name="Delley M."/>
            <person name="Pridmore R.D."/>
            <person name="Arigoni F."/>
        </authorList>
    </citation>
    <scope>NUCLEOTIDE SEQUENCE [LARGE SCALE GENOMIC DNA]</scope>
    <source>
        <strain>NCC 2705</strain>
    </source>
</reference>
<evidence type="ECO:0000255" key="1">
    <source>
        <dbReference type="PROSITE-ProRule" id="PRU00159"/>
    </source>
</evidence>
<evidence type="ECO:0000255" key="2">
    <source>
        <dbReference type="PROSITE-ProRule" id="PRU00528"/>
    </source>
</evidence>
<evidence type="ECO:0000255" key="3">
    <source>
        <dbReference type="PROSITE-ProRule" id="PRU10027"/>
    </source>
</evidence>
<evidence type="ECO:0000256" key="4">
    <source>
        <dbReference type="SAM" id="MobiDB-lite"/>
    </source>
</evidence>
<sequence length="757" mass="80088">MSENEPAQMIEGRYRIVRNIAEGGMATVYEAIDERLGRTVAIKVMHTQLAKGPHREQFVERFRREANSAASIANPHIVQVYDTGEFNGLDFLVMEYVHGVNLRHEMNAQGTFSVRETLRVVAETLDGLASAHRAGVVHRDIKPENILINDRGHVQITDFGLAKAASQATLSSTGMLLGTAAYLAPEMIENNQATAQGDLYSVGIMAWEMLTGKVPFDSDNPVTLVFKHVHEDVPSVATVCQGIDPSVAAFIAHLTARQVDARPTDGAAAAEELSQLAAKLPLEAWQYRLHAEPIGGDHTDATAAALVGNIAEQAPLTGVPAGAATFKPSVPAFLADDVASNTVDTGGAADVNPPAPPVAPTTALDSSTPADASAPHKTQIMAQSGSETQVLPQAGDAFTRALAFSDEPDVASNGTGPKKQRSKKPLIIVLVIVLVLAAIGGTAGWWWFAGPGSYWSVPKPDDVTCDANASTECSLAGADWATYESTLKALGIPYKTHKEYSDDVAEGKIISSSVNKTKAVVNSRISKRANQELTVVVSKGVRMTTIPKDILDANSANGKDPLNALKKAGFDNVKHDESKDEYSMDTPQGVALTISPDPGTTAKHNDEVTVTLSKGPMPVTMPNIVGKTQDEMQAALGELKLTANVTEQYDDKVEAGQVISASQEAGAQLKWGDSVDVVISKGPEMATIPSGLVGKQESAVTKTLEGLGFEVKTDKVLGGLFGTVRTVKSGDTDLSNGGKIRLRDANGNPTVITLTIV</sequence>
<protein>
    <recommendedName>
        <fullName>Probable serine/threonine-protein kinase pknA2</fullName>
        <ecNumber>2.7.11.1</ecNumber>
    </recommendedName>
</protein>
<name>PKNA2_BIFLO</name>
<dbReference type="EC" id="2.7.11.1"/>
<dbReference type="EMBL" id="AE014295">
    <property type="protein sequence ID" value="AAN25222.1"/>
    <property type="molecule type" value="Genomic_DNA"/>
</dbReference>
<dbReference type="RefSeq" id="NP_696586.1">
    <property type="nucleotide sequence ID" value="NC_004307.2"/>
</dbReference>
<dbReference type="RefSeq" id="WP_011068042.1">
    <property type="nucleotide sequence ID" value="NC_004307.2"/>
</dbReference>
<dbReference type="SMR" id="Q8G4G1"/>
<dbReference type="STRING" id="206672.BL1425"/>
<dbReference type="EnsemblBacteria" id="AAN25222">
    <property type="protein sequence ID" value="AAN25222"/>
    <property type="gene ID" value="BL1425"/>
</dbReference>
<dbReference type="KEGG" id="blo:BL1425"/>
<dbReference type="PATRIC" id="fig|206672.9.peg.283"/>
<dbReference type="HOGENOM" id="CLU_000288_135_2_11"/>
<dbReference type="OrthoDB" id="9762169at2"/>
<dbReference type="PhylomeDB" id="Q8G4G1"/>
<dbReference type="Proteomes" id="UP000000439">
    <property type="component" value="Chromosome"/>
</dbReference>
<dbReference type="GO" id="GO:0005524">
    <property type="term" value="F:ATP binding"/>
    <property type="evidence" value="ECO:0007669"/>
    <property type="project" value="UniProtKB-KW"/>
</dbReference>
<dbReference type="GO" id="GO:0106310">
    <property type="term" value="F:protein serine kinase activity"/>
    <property type="evidence" value="ECO:0007669"/>
    <property type="project" value="RHEA"/>
</dbReference>
<dbReference type="GO" id="GO:0004674">
    <property type="term" value="F:protein serine/threonine kinase activity"/>
    <property type="evidence" value="ECO:0007669"/>
    <property type="project" value="UniProtKB-KW"/>
</dbReference>
<dbReference type="CDD" id="cd06577">
    <property type="entry name" value="PASTA_pknB"/>
    <property type="match status" value="2"/>
</dbReference>
<dbReference type="CDD" id="cd14014">
    <property type="entry name" value="STKc_PknB_like"/>
    <property type="match status" value="1"/>
</dbReference>
<dbReference type="FunFam" id="1.10.510.10:FF:000021">
    <property type="entry name" value="Serine/threonine protein kinase"/>
    <property type="match status" value="1"/>
</dbReference>
<dbReference type="FunFam" id="3.30.200.20:FF:000035">
    <property type="entry name" value="Serine/threonine protein kinase Stk1"/>
    <property type="match status" value="1"/>
</dbReference>
<dbReference type="Gene3D" id="3.30.10.20">
    <property type="match status" value="3"/>
</dbReference>
<dbReference type="Gene3D" id="3.30.200.20">
    <property type="entry name" value="Phosphorylase Kinase, domain 1"/>
    <property type="match status" value="1"/>
</dbReference>
<dbReference type="Gene3D" id="1.10.510.10">
    <property type="entry name" value="Transferase(Phosphotransferase) domain 1"/>
    <property type="match status" value="1"/>
</dbReference>
<dbReference type="InterPro" id="IPR011009">
    <property type="entry name" value="Kinase-like_dom_sf"/>
</dbReference>
<dbReference type="InterPro" id="IPR005543">
    <property type="entry name" value="PASTA_dom"/>
</dbReference>
<dbReference type="InterPro" id="IPR000719">
    <property type="entry name" value="Prot_kinase_dom"/>
</dbReference>
<dbReference type="InterPro" id="IPR008271">
    <property type="entry name" value="Ser/Thr_kinase_AS"/>
</dbReference>
<dbReference type="PANTHER" id="PTHR43289">
    <property type="entry name" value="MITOGEN-ACTIVATED PROTEIN KINASE KINASE KINASE 20-RELATED"/>
    <property type="match status" value="1"/>
</dbReference>
<dbReference type="PANTHER" id="PTHR43289:SF6">
    <property type="entry name" value="SERINE_THREONINE-PROTEIN KINASE NEKL-3"/>
    <property type="match status" value="1"/>
</dbReference>
<dbReference type="Pfam" id="PF03793">
    <property type="entry name" value="PASTA"/>
    <property type="match status" value="3"/>
</dbReference>
<dbReference type="Pfam" id="PF00069">
    <property type="entry name" value="Pkinase"/>
    <property type="match status" value="1"/>
</dbReference>
<dbReference type="SMART" id="SM00740">
    <property type="entry name" value="PASTA"/>
    <property type="match status" value="3"/>
</dbReference>
<dbReference type="SMART" id="SM00220">
    <property type="entry name" value="S_TKc"/>
    <property type="match status" value="1"/>
</dbReference>
<dbReference type="SUPFAM" id="SSF56112">
    <property type="entry name" value="Protein kinase-like (PK-like)"/>
    <property type="match status" value="1"/>
</dbReference>
<dbReference type="PROSITE" id="PS51178">
    <property type="entry name" value="PASTA"/>
    <property type="match status" value="3"/>
</dbReference>
<dbReference type="PROSITE" id="PS50011">
    <property type="entry name" value="PROTEIN_KINASE_DOM"/>
    <property type="match status" value="1"/>
</dbReference>
<dbReference type="PROSITE" id="PS00108">
    <property type="entry name" value="PROTEIN_KINASE_ST"/>
    <property type="match status" value="1"/>
</dbReference>
<organism>
    <name type="scientific">Bifidobacterium longum (strain NCC 2705)</name>
    <dbReference type="NCBI Taxonomy" id="206672"/>
    <lineage>
        <taxon>Bacteria</taxon>
        <taxon>Bacillati</taxon>
        <taxon>Actinomycetota</taxon>
        <taxon>Actinomycetes</taxon>
        <taxon>Bifidobacteriales</taxon>
        <taxon>Bifidobacteriaceae</taxon>
        <taxon>Bifidobacterium</taxon>
    </lineage>
</organism>
<comment type="catalytic activity">
    <reaction>
        <text>L-seryl-[protein] + ATP = O-phospho-L-seryl-[protein] + ADP + H(+)</text>
        <dbReference type="Rhea" id="RHEA:17989"/>
        <dbReference type="Rhea" id="RHEA-COMP:9863"/>
        <dbReference type="Rhea" id="RHEA-COMP:11604"/>
        <dbReference type="ChEBI" id="CHEBI:15378"/>
        <dbReference type="ChEBI" id="CHEBI:29999"/>
        <dbReference type="ChEBI" id="CHEBI:30616"/>
        <dbReference type="ChEBI" id="CHEBI:83421"/>
        <dbReference type="ChEBI" id="CHEBI:456216"/>
        <dbReference type="EC" id="2.7.11.1"/>
    </reaction>
</comment>
<comment type="catalytic activity">
    <reaction>
        <text>L-threonyl-[protein] + ATP = O-phospho-L-threonyl-[protein] + ADP + H(+)</text>
        <dbReference type="Rhea" id="RHEA:46608"/>
        <dbReference type="Rhea" id="RHEA-COMP:11060"/>
        <dbReference type="Rhea" id="RHEA-COMP:11605"/>
        <dbReference type="ChEBI" id="CHEBI:15378"/>
        <dbReference type="ChEBI" id="CHEBI:30013"/>
        <dbReference type="ChEBI" id="CHEBI:30616"/>
        <dbReference type="ChEBI" id="CHEBI:61977"/>
        <dbReference type="ChEBI" id="CHEBI:456216"/>
        <dbReference type="EC" id="2.7.11.1"/>
    </reaction>
</comment>
<comment type="similarity">
    <text evidence="1">Belongs to the protein kinase superfamily. Ser/Thr protein kinase family.</text>
</comment>